<feature type="chain" id="PRO_0000062230" description="Large ribosomal subunit protein uL16">
    <location>
        <begin position="1"/>
        <end position="142"/>
    </location>
</feature>
<feature type="region of interest" description="Disordered" evidence="2">
    <location>
        <begin position="1"/>
        <end position="22"/>
    </location>
</feature>
<feature type="compositionally biased region" description="Basic residues" evidence="2">
    <location>
        <begin position="1"/>
        <end position="14"/>
    </location>
</feature>
<keyword id="KW-0687">Ribonucleoprotein</keyword>
<keyword id="KW-0689">Ribosomal protein</keyword>
<keyword id="KW-0694">RNA-binding</keyword>
<keyword id="KW-0699">rRNA-binding</keyword>
<keyword id="KW-0820">tRNA-binding</keyword>
<organism>
    <name type="scientific">Synechococcus sp. (strain ATCC 27144 / PCC 6301 / SAUG 1402/1)</name>
    <name type="common">Anacystis nidulans</name>
    <dbReference type="NCBI Taxonomy" id="269084"/>
    <lineage>
        <taxon>Bacteria</taxon>
        <taxon>Bacillati</taxon>
        <taxon>Cyanobacteriota</taxon>
        <taxon>Cyanophyceae</taxon>
        <taxon>Synechococcales</taxon>
        <taxon>Synechococcaceae</taxon>
        <taxon>Synechococcus</taxon>
    </lineage>
</organism>
<protein>
    <recommendedName>
        <fullName evidence="1">Large ribosomal subunit protein uL16</fullName>
    </recommendedName>
    <alternativeName>
        <fullName evidence="3">50S ribosomal protein L16</fullName>
    </alternativeName>
</protein>
<accession>O24696</accession>
<name>RL16_SYNP6</name>
<gene>
    <name evidence="1" type="primary">rplP</name>
    <name evidence="1" type="synonym">rpl16</name>
    <name type="ordered locus">syc1872_d</name>
</gene>
<evidence type="ECO:0000255" key="1">
    <source>
        <dbReference type="HAMAP-Rule" id="MF_01342"/>
    </source>
</evidence>
<evidence type="ECO:0000256" key="2">
    <source>
        <dbReference type="SAM" id="MobiDB-lite"/>
    </source>
</evidence>
<evidence type="ECO:0000305" key="3"/>
<dbReference type="EMBL" id="AB000111">
    <property type="protein sequence ID" value="BAA22456.1"/>
    <property type="molecule type" value="Genomic_DNA"/>
</dbReference>
<dbReference type="EMBL" id="AP008231">
    <property type="protein sequence ID" value="BAD80062.1"/>
    <property type="molecule type" value="Genomic_DNA"/>
</dbReference>
<dbReference type="RefSeq" id="WP_011244182.1">
    <property type="nucleotide sequence ID" value="NZ_CP085785.1"/>
</dbReference>
<dbReference type="SMR" id="O24696"/>
<dbReference type="GeneID" id="72431108"/>
<dbReference type="KEGG" id="syc:syc1872_d"/>
<dbReference type="eggNOG" id="COG0197">
    <property type="taxonomic scope" value="Bacteria"/>
</dbReference>
<dbReference type="Proteomes" id="UP000001175">
    <property type="component" value="Chromosome"/>
</dbReference>
<dbReference type="GO" id="GO:1990904">
    <property type="term" value="C:ribonucleoprotein complex"/>
    <property type="evidence" value="ECO:0007669"/>
    <property type="project" value="UniProtKB-KW"/>
</dbReference>
<dbReference type="GO" id="GO:0005840">
    <property type="term" value="C:ribosome"/>
    <property type="evidence" value="ECO:0007669"/>
    <property type="project" value="UniProtKB-KW"/>
</dbReference>
<dbReference type="GO" id="GO:0019843">
    <property type="term" value="F:rRNA binding"/>
    <property type="evidence" value="ECO:0007669"/>
    <property type="project" value="UniProtKB-UniRule"/>
</dbReference>
<dbReference type="GO" id="GO:0003735">
    <property type="term" value="F:structural constituent of ribosome"/>
    <property type="evidence" value="ECO:0007669"/>
    <property type="project" value="InterPro"/>
</dbReference>
<dbReference type="GO" id="GO:0000049">
    <property type="term" value="F:tRNA binding"/>
    <property type="evidence" value="ECO:0007669"/>
    <property type="project" value="UniProtKB-KW"/>
</dbReference>
<dbReference type="GO" id="GO:0006412">
    <property type="term" value="P:translation"/>
    <property type="evidence" value="ECO:0007669"/>
    <property type="project" value="UniProtKB-UniRule"/>
</dbReference>
<dbReference type="CDD" id="cd01433">
    <property type="entry name" value="Ribosomal_L16_L10e"/>
    <property type="match status" value="1"/>
</dbReference>
<dbReference type="FunFam" id="3.90.1170.10:FF:000001">
    <property type="entry name" value="50S ribosomal protein L16"/>
    <property type="match status" value="1"/>
</dbReference>
<dbReference type="Gene3D" id="3.90.1170.10">
    <property type="entry name" value="Ribosomal protein L10e/L16"/>
    <property type="match status" value="1"/>
</dbReference>
<dbReference type="HAMAP" id="MF_01342">
    <property type="entry name" value="Ribosomal_uL16"/>
    <property type="match status" value="1"/>
</dbReference>
<dbReference type="InterPro" id="IPR047873">
    <property type="entry name" value="Ribosomal_uL16"/>
</dbReference>
<dbReference type="InterPro" id="IPR000114">
    <property type="entry name" value="Ribosomal_uL16_bact-type"/>
</dbReference>
<dbReference type="InterPro" id="IPR020798">
    <property type="entry name" value="Ribosomal_uL16_CS"/>
</dbReference>
<dbReference type="InterPro" id="IPR016180">
    <property type="entry name" value="Ribosomal_uL16_dom"/>
</dbReference>
<dbReference type="InterPro" id="IPR036920">
    <property type="entry name" value="Ribosomal_uL16_sf"/>
</dbReference>
<dbReference type="NCBIfam" id="TIGR01164">
    <property type="entry name" value="rplP_bact"/>
    <property type="match status" value="1"/>
</dbReference>
<dbReference type="PANTHER" id="PTHR12220">
    <property type="entry name" value="50S/60S RIBOSOMAL PROTEIN L16"/>
    <property type="match status" value="1"/>
</dbReference>
<dbReference type="PANTHER" id="PTHR12220:SF13">
    <property type="entry name" value="LARGE RIBOSOMAL SUBUNIT PROTEIN UL16M"/>
    <property type="match status" value="1"/>
</dbReference>
<dbReference type="Pfam" id="PF00252">
    <property type="entry name" value="Ribosomal_L16"/>
    <property type="match status" value="1"/>
</dbReference>
<dbReference type="PRINTS" id="PR00060">
    <property type="entry name" value="RIBOSOMALL16"/>
</dbReference>
<dbReference type="SUPFAM" id="SSF54686">
    <property type="entry name" value="Ribosomal protein L16p/L10e"/>
    <property type="match status" value="1"/>
</dbReference>
<dbReference type="PROSITE" id="PS00586">
    <property type="entry name" value="RIBOSOMAL_L16_1"/>
    <property type="match status" value="1"/>
</dbReference>
<dbReference type="PROSITE" id="PS00701">
    <property type="entry name" value="RIBOSOMAL_L16_2"/>
    <property type="match status" value="1"/>
</dbReference>
<proteinExistence type="inferred from homology"/>
<reference key="1">
    <citation type="journal article" date="1997" name="Gene">
        <title>Organization of a large gene cluster encoding ribosomal proteins in the cyanobacterium Synechococcus sp. strain PCC 6301: comparison of gene clusters among cyanobacteria, eubacteria and chloroplast genomes.</title>
        <authorList>
            <person name="Sugita M."/>
            <person name="Sugishita H."/>
            <person name="Fujishiro T."/>
            <person name="Tsuboi M."/>
            <person name="Sugita C."/>
            <person name="Endo T."/>
            <person name="Sugiura M."/>
        </authorList>
    </citation>
    <scope>NUCLEOTIDE SEQUENCE [GENOMIC DNA]</scope>
</reference>
<reference key="2">
    <citation type="journal article" date="2007" name="Photosyn. Res.">
        <title>Complete nucleotide sequence of the freshwater unicellular cyanobacterium Synechococcus elongatus PCC 6301 chromosome: gene content and organization.</title>
        <authorList>
            <person name="Sugita C."/>
            <person name="Ogata K."/>
            <person name="Shikata M."/>
            <person name="Jikuya H."/>
            <person name="Takano J."/>
            <person name="Furumichi M."/>
            <person name="Kanehisa M."/>
            <person name="Omata T."/>
            <person name="Sugiura M."/>
            <person name="Sugita M."/>
        </authorList>
    </citation>
    <scope>NUCLEOTIDE SEQUENCE [LARGE SCALE GENOMIC DNA]</scope>
    <source>
        <strain>ATCC 27144 / PCC 6301 / SAUG 1402/1</strain>
    </source>
</reference>
<sequence>MLSPRRTKFRKQQRGRMTGKATRGNTLAFGNFGLQALECSWITARQIEASRRAMTRYTRRGGKIWIRIFPDKPITMRPAETRMGSGKGNPEFWVAVVKPGRVLFEIGGEVAEETAREAMRLASHKLPIKTKFITRDSEAQEA</sequence>
<comment type="function">
    <text evidence="1">Binds 23S rRNA and is also seen to make contacts with the A and possibly P site tRNAs.</text>
</comment>
<comment type="subunit">
    <text evidence="1">Part of the 50S ribosomal subunit.</text>
</comment>
<comment type="similarity">
    <text evidence="1">Belongs to the universal ribosomal protein uL16 family.</text>
</comment>